<organism>
    <name type="scientific">Thermofilum pendens (strain DSM 2475 / Hrk 5)</name>
    <dbReference type="NCBI Taxonomy" id="368408"/>
    <lineage>
        <taxon>Archaea</taxon>
        <taxon>Thermoproteota</taxon>
        <taxon>Thermoprotei</taxon>
        <taxon>Thermofilales</taxon>
        <taxon>Thermofilaceae</taxon>
        <taxon>Thermofilum</taxon>
    </lineage>
</organism>
<keyword id="KW-1185">Reference proteome</keyword>
<keyword id="KW-0687">Ribonucleoprotein</keyword>
<keyword id="KW-0689">Ribosomal protein</keyword>
<reference key="1">
    <citation type="journal article" date="2008" name="J. Bacteriol.">
        <title>Genome sequence of Thermofilum pendens reveals an exceptional loss of biosynthetic pathways without genome reduction.</title>
        <authorList>
            <person name="Anderson I."/>
            <person name="Rodriguez J."/>
            <person name="Susanti D."/>
            <person name="Porat I."/>
            <person name="Reich C."/>
            <person name="Ulrich L.E."/>
            <person name="Elkins J.G."/>
            <person name="Mavromatis K."/>
            <person name="Lykidis A."/>
            <person name="Kim E."/>
            <person name="Thompson L.S."/>
            <person name="Nolan M."/>
            <person name="Land M."/>
            <person name="Copeland A."/>
            <person name="Lapidus A."/>
            <person name="Lucas S."/>
            <person name="Detter C."/>
            <person name="Zhulin I.B."/>
            <person name="Olsen G.J."/>
            <person name="Whitman W."/>
            <person name="Mukhopadhyay B."/>
            <person name="Bristow J."/>
            <person name="Kyrpides N."/>
        </authorList>
    </citation>
    <scope>NUCLEOTIDE SEQUENCE [LARGE SCALE GENOMIC DNA]</scope>
    <source>
        <strain>DSM 2475 / Hrk 5</strain>
    </source>
</reference>
<proteinExistence type="inferred from homology"/>
<sequence length="91" mass="10407">MPRPALRSRSKKRKLVRTPGGRLALHVIDKKHDYPKCAICGRPIQGVPKLTSRLERRGVRMPTRPYGGYLCHECLRKGIKLSVWMSASKQE</sequence>
<name>RL34_THEPD</name>
<dbReference type="EMBL" id="CP000505">
    <property type="protein sequence ID" value="ABL78031.1"/>
    <property type="molecule type" value="Genomic_DNA"/>
</dbReference>
<dbReference type="SMR" id="A1RXV1"/>
<dbReference type="STRING" id="368408.Tpen_0627"/>
<dbReference type="EnsemblBacteria" id="ABL78031">
    <property type="protein sequence ID" value="ABL78031"/>
    <property type="gene ID" value="Tpen_0627"/>
</dbReference>
<dbReference type="KEGG" id="tpe:Tpen_0627"/>
<dbReference type="eggNOG" id="arCOG04168">
    <property type="taxonomic scope" value="Archaea"/>
</dbReference>
<dbReference type="HOGENOM" id="CLU_118652_2_0_2"/>
<dbReference type="OrthoDB" id="43096at2157"/>
<dbReference type="Proteomes" id="UP000000641">
    <property type="component" value="Chromosome"/>
</dbReference>
<dbReference type="GO" id="GO:1990904">
    <property type="term" value="C:ribonucleoprotein complex"/>
    <property type="evidence" value="ECO:0007669"/>
    <property type="project" value="UniProtKB-KW"/>
</dbReference>
<dbReference type="GO" id="GO:0005840">
    <property type="term" value="C:ribosome"/>
    <property type="evidence" value="ECO:0007669"/>
    <property type="project" value="UniProtKB-KW"/>
</dbReference>
<dbReference type="GO" id="GO:0003735">
    <property type="term" value="F:structural constituent of ribosome"/>
    <property type="evidence" value="ECO:0007669"/>
    <property type="project" value="InterPro"/>
</dbReference>
<dbReference type="GO" id="GO:0006412">
    <property type="term" value="P:translation"/>
    <property type="evidence" value="ECO:0007669"/>
    <property type="project" value="UniProtKB-UniRule"/>
</dbReference>
<dbReference type="Gene3D" id="6.20.340.10">
    <property type="match status" value="1"/>
</dbReference>
<dbReference type="Gene3D" id="6.20.370.70">
    <property type="match status" value="1"/>
</dbReference>
<dbReference type="HAMAP" id="MF_00349">
    <property type="entry name" value="Ribosomal_eL34"/>
    <property type="match status" value="1"/>
</dbReference>
<dbReference type="InterPro" id="IPR008195">
    <property type="entry name" value="Ribosomal_eL34"/>
</dbReference>
<dbReference type="InterPro" id="IPR038562">
    <property type="entry name" value="Ribosomal_eL34_C_sf"/>
</dbReference>
<dbReference type="InterPro" id="IPR018065">
    <property type="entry name" value="Ribosomal_eL34_CS"/>
</dbReference>
<dbReference type="InterPro" id="IPR047868">
    <property type="entry name" value="Ribosomal_L34e_arc-type"/>
</dbReference>
<dbReference type="PANTHER" id="PTHR10759">
    <property type="entry name" value="60S RIBOSOMAL PROTEIN L34"/>
    <property type="match status" value="1"/>
</dbReference>
<dbReference type="Pfam" id="PF01199">
    <property type="entry name" value="Ribosomal_L34e"/>
    <property type="match status" value="1"/>
</dbReference>
<dbReference type="PRINTS" id="PR01250">
    <property type="entry name" value="RIBOSOMALL34"/>
</dbReference>
<dbReference type="PROSITE" id="PS01145">
    <property type="entry name" value="RIBOSOMAL_L34E"/>
    <property type="match status" value="1"/>
</dbReference>
<feature type="chain" id="PRO_1000133416" description="Large ribosomal subunit protein eL34">
    <location>
        <begin position="1"/>
        <end position="91"/>
    </location>
</feature>
<accession>A1RXV1</accession>
<protein>
    <recommendedName>
        <fullName evidence="1">Large ribosomal subunit protein eL34</fullName>
    </recommendedName>
    <alternativeName>
        <fullName evidence="2">50S ribosomal protein L34e</fullName>
    </alternativeName>
</protein>
<evidence type="ECO:0000255" key="1">
    <source>
        <dbReference type="HAMAP-Rule" id="MF_00349"/>
    </source>
</evidence>
<evidence type="ECO:0000305" key="2"/>
<comment type="similarity">
    <text evidence="1">Belongs to the eukaryotic ribosomal protein eL34 family.</text>
</comment>
<gene>
    <name evidence="1" type="primary">rpl34e</name>
    <name type="ordered locus">Tpen_0627</name>
</gene>